<organism>
    <name type="scientific">Xanthomonas euvesicatoria pv. vesicatoria (strain 85-10)</name>
    <name type="common">Xanthomonas campestris pv. vesicatoria</name>
    <dbReference type="NCBI Taxonomy" id="316273"/>
    <lineage>
        <taxon>Bacteria</taxon>
        <taxon>Pseudomonadati</taxon>
        <taxon>Pseudomonadota</taxon>
        <taxon>Gammaproteobacteria</taxon>
        <taxon>Lysobacterales</taxon>
        <taxon>Lysobacteraceae</taxon>
        <taxon>Xanthomonas</taxon>
    </lineage>
</organism>
<accession>Q3BV06</accession>
<evidence type="ECO:0000255" key="1">
    <source>
        <dbReference type="HAMAP-Rule" id="MF_00577"/>
    </source>
</evidence>
<protein>
    <recommendedName>
        <fullName evidence="1">Urocanate hydratase</fullName>
        <shortName evidence="1">Urocanase</shortName>
        <ecNumber evidence="1">4.2.1.49</ecNumber>
    </recommendedName>
    <alternativeName>
        <fullName evidence="1">Imidazolonepropionate hydrolase</fullName>
    </alternativeName>
</protein>
<feature type="chain" id="PRO_1000025161" description="Urocanate hydratase">
    <location>
        <begin position="1"/>
        <end position="555"/>
    </location>
</feature>
<feature type="active site" evidence="1">
    <location>
        <position position="409"/>
    </location>
</feature>
<feature type="binding site" evidence="1">
    <location>
        <begin position="51"/>
        <end position="52"/>
    </location>
    <ligand>
        <name>NAD(+)</name>
        <dbReference type="ChEBI" id="CHEBI:57540"/>
    </ligand>
</feature>
<feature type="binding site" evidence="1">
    <location>
        <position position="129"/>
    </location>
    <ligand>
        <name>NAD(+)</name>
        <dbReference type="ChEBI" id="CHEBI:57540"/>
    </ligand>
</feature>
<feature type="binding site" evidence="1">
    <location>
        <begin position="175"/>
        <end position="177"/>
    </location>
    <ligand>
        <name>NAD(+)</name>
        <dbReference type="ChEBI" id="CHEBI:57540"/>
    </ligand>
</feature>
<feature type="binding site" evidence="1">
    <location>
        <position position="195"/>
    </location>
    <ligand>
        <name>NAD(+)</name>
        <dbReference type="ChEBI" id="CHEBI:57540"/>
    </ligand>
</feature>
<feature type="binding site" evidence="1">
    <location>
        <begin position="262"/>
        <end position="266"/>
    </location>
    <ligand>
        <name>NAD(+)</name>
        <dbReference type="ChEBI" id="CHEBI:57540"/>
    </ligand>
</feature>
<feature type="binding site" evidence="1">
    <location>
        <begin position="272"/>
        <end position="273"/>
    </location>
    <ligand>
        <name>NAD(+)</name>
        <dbReference type="ChEBI" id="CHEBI:57540"/>
    </ligand>
</feature>
<feature type="binding site" evidence="1">
    <location>
        <position position="321"/>
    </location>
    <ligand>
        <name>NAD(+)</name>
        <dbReference type="ChEBI" id="CHEBI:57540"/>
    </ligand>
</feature>
<feature type="binding site" evidence="1">
    <location>
        <position position="491"/>
    </location>
    <ligand>
        <name>NAD(+)</name>
        <dbReference type="ChEBI" id="CHEBI:57540"/>
    </ligand>
</feature>
<reference key="1">
    <citation type="journal article" date="2005" name="J. Bacteriol.">
        <title>Insights into genome plasticity and pathogenicity of the plant pathogenic Bacterium Xanthomonas campestris pv. vesicatoria revealed by the complete genome sequence.</title>
        <authorList>
            <person name="Thieme F."/>
            <person name="Koebnik R."/>
            <person name="Bekel T."/>
            <person name="Berger C."/>
            <person name="Boch J."/>
            <person name="Buettner D."/>
            <person name="Caldana C."/>
            <person name="Gaigalat L."/>
            <person name="Goesmann A."/>
            <person name="Kay S."/>
            <person name="Kirchner O."/>
            <person name="Lanz C."/>
            <person name="Linke B."/>
            <person name="McHardy A.C."/>
            <person name="Meyer F."/>
            <person name="Mittenhuber G."/>
            <person name="Nies D.H."/>
            <person name="Niesbach-Kloesgen U."/>
            <person name="Patschkowski T."/>
            <person name="Rueckert C."/>
            <person name="Rupp O."/>
            <person name="Schneiker S."/>
            <person name="Schuster S.C."/>
            <person name="Vorhoelter F.J."/>
            <person name="Weber E."/>
            <person name="Puehler A."/>
            <person name="Bonas U."/>
            <person name="Bartels D."/>
            <person name="Kaiser O."/>
        </authorList>
    </citation>
    <scope>NUCLEOTIDE SEQUENCE [LARGE SCALE GENOMIC DNA]</scope>
    <source>
        <strain>85-10</strain>
    </source>
</reference>
<comment type="function">
    <text evidence="1">Catalyzes the conversion of urocanate to 4-imidazolone-5-propionate.</text>
</comment>
<comment type="catalytic activity">
    <reaction evidence="1">
        <text>4-imidazolone-5-propanoate = trans-urocanate + H2O</text>
        <dbReference type="Rhea" id="RHEA:13101"/>
        <dbReference type="ChEBI" id="CHEBI:15377"/>
        <dbReference type="ChEBI" id="CHEBI:17771"/>
        <dbReference type="ChEBI" id="CHEBI:77893"/>
        <dbReference type="EC" id="4.2.1.49"/>
    </reaction>
</comment>
<comment type="cofactor">
    <cofactor evidence="1">
        <name>NAD(+)</name>
        <dbReference type="ChEBI" id="CHEBI:57540"/>
    </cofactor>
    <text evidence="1">Binds 1 NAD(+) per subunit.</text>
</comment>
<comment type="pathway">
    <text evidence="1">Amino-acid degradation; L-histidine degradation into L-glutamate; N-formimidoyl-L-glutamate from L-histidine: step 2/3.</text>
</comment>
<comment type="subcellular location">
    <subcellularLocation>
        <location evidence="1">Cytoplasm</location>
    </subcellularLocation>
</comment>
<comment type="similarity">
    <text evidence="1">Belongs to the urocanase family.</text>
</comment>
<dbReference type="EC" id="4.2.1.49" evidence="1"/>
<dbReference type="EMBL" id="AM039952">
    <property type="protein sequence ID" value="CAJ23353.1"/>
    <property type="molecule type" value="Genomic_DNA"/>
</dbReference>
<dbReference type="RefSeq" id="WP_011347035.1">
    <property type="nucleotide sequence ID" value="NZ_CP017190.1"/>
</dbReference>
<dbReference type="SMR" id="Q3BV06"/>
<dbReference type="STRING" id="456327.BJD11_14200"/>
<dbReference type="KEGG" id="xcv:XCV1676"/>
<dbReference type="eggNOG" id="COG2987">
    <property type="taxonomic scope" value="Bacteria"/>
</dbReference>
<dbReference type="HOGENOM" id="CLU_018868_0_1_6"/>
<dbReference type="UniPathway" id="UPA00379">
    <property type="reaction ID" value="UER00550"/>
</dbReference>
<dbReference type="Proteomes" id="UP000007069">
    <property type="component" value="Chromosome"/>
</dbReference>
<dbReference type="GO" id="GO:0005737">
    <property type="term" value="C:cytoplasm"/>
    <property type="evidence" value="ECO:0007669"/>
    <property type="project" value="UniProtKB-SubCell"/>
</dbReference>
<dbReference type="GO" id="GO:0016153">
    <property type="term" value="F:urocanate hydratase activity"/>
    <property type="evidence" value="ECO:0007669"/>
    <property type="project" value="UniProtKB-UniRule"/>
</dbReference>
<dbReference type="GO" id="GO:0019556">
    <property type="term" value="P:L-histidine catabolic process to glutamate and formamide"/>
    <property type="evidence" value="ECO:0007669"/>
    <property type="project" value="UniProtKB-UniPathway"/>
</dbReference>
<dbReference type="GO" id="GO:0019557">
    <property type="term" value="P:L-histidine catabolic process to glutamate and formate"/>
    <property type="evidence" value="ECO:0007669"/>
    <property type="project" value="UniProtKB-UniPathway"/>
</dbReference>
<dbReference type="FunFam" id="3.40.50.10730:FF:000001">
    <property type="entry name" value="Urocanate hydratase"/>
    <property type="match status" value="1"/>
</dbReference>
<dbReference type="Gene3D" id="3.40.50.10730">
    <property type="entry name" value="Urocanase like domains"/>
    <property type="match status" value="1"/>
</dbReference>
<dbReference type="Gene3D" id="3.40.1770.10">
    <property type="entry name" value="Urocanase superfamily"/>
    <property type="match status" value="1"/>
</dbReference>
<dbReference type="HAMAP" id="MF_00577">
    <property type="entry name" value="HutU"/>
    <property type="match status" value="1"/>
</dbReference>
<dbReference type="InterPro" id="IPR055351">
    <property type="entry name" value="Urocanase"/>
</dbReference>
<dbReference type="InterPro" id="IPR023637">
    <property type="entry name" value="Urocanase-like"/>
</dbReference>
<dbReference type="InterPro" id="IPR035401">
    <property type="entry name" value="Urocanase_C"/>
</dbReference>
<dbReference type="InterPro" id="IPR038364">
    <property type="entry name" value="Urocanase_central_sf"/>
</dbReference>
<dbReference type="InterPro" id="IPR023636">
    <property type="entry name" value="Urocanase_CS"/>
</dbReference>
<dbReference type="InterPro" id="IPR035400">
    <property type="entry name" value="Urocanase_N"/>
</dbReference>
<dbReference type="InterPro" id="IPR035085">
    <property type="entry name" value="Urocanase_Rossmann-like"/>
</dbReference>
<dbReference type="InterPro" id="IPR036190">
    <property type="entry name" value="Urocanase_sf"/>
</dbReference>
<dbReference type="NCBIfam" id="TIGR01228">
    <property type="entry name" value="hutU"/>
    <property type="match status" value="1"/>
</dbReference>
<dbReference type="NCBIfam" id="NF003820">
    <property type="entry name" value="PRK05414.1"/>
    <property type="match status" value="1"/>
</dbReference>
<dbReference type="PANTHER" id="PTHR12216">
    <property type="entry name" value="UROCANATE HYDRATASE"/>
    <property type="match status" value="1"/>
</dbReference>
<dbReference type="PANTHER" id="PTHR12216:SF4">
    <property type="entry name" value="UROCANATE HYDRATASE"/>
    <property type="match status" value="1"/>
</dbReference>
<dbReference type="Pfam" id="PF01175">
    <property type="entry name" value="Urocanase"/>
    <property type="match status" value="1"/>
</dbReference>
<dbReference type="Pfam" id="PF17392">
    <property type="entry name" value="Urocanase_C"/>
    <property type="match status" value="1"/>
</dbReference>
<dbReference type="Pfam" id="PF17391">
    <property type="entry name" value="Urocanase_N"/>
    <property type="match status" value="1"/>
</dbReference>
<dbReference type="PIRSF" id="PIRSF001423">
    <property type="entry name" value="Urocanate_hydrat"/>
    <property type="match status" value="1"/>
</dbReference>
<dbReference type="SUPFAM" id="SSF111326">
    <property type="entry name" value="Urocanase"/>
    <property type="match status" value="1"/>
</dbReference>
<dbReference type="PROSITE" id="PS01233">
    <property type="entry name" value="UROCANASE"/>
    <property type="match status" value="1"/>
</dbReference>
<proteinExistence type="inferred from homology"/>
<name>HUTU_XANE5</name>
<sequence length="555" mass="60152">MTRHDATRVIRAATGTTLTAKSWLTEAPLRMLMNNLDPDVAEHPQELVVYGGIGRAARDWESFDAIVAALTRLDEDQTLLVQSGKPVGVFRTHADAPRVLIANSNLVPRWANWDHFSELDQKGLAMYGQMTAGSWIYIGAQGIVQGTYETFVEMGRQHYAGNLAGKWLFTGGLGGMGGAQPLAAVMAGASCLVVECRRSSIDMRLRTGYLDTWTDSLDEALRLIEESCTAKKPLSVGLLGNVADVLDELLLRGIKPDLLTDQTSAHDPVNGYLPQGWSVEEWDAKRVSARKEVEAAARESMANHIRAMLTFHALGVPTVDYGNNLRQMALEAGIDNAFDFPGFVPAYIRPLFCRGIGPFRWVALSGDPDDIAKTDAKVKELIPDDAHLHRWLDMAAEKIAFQGLPARICWVGLGDRHRLGLAFNAMVRSGELKAPVVIGRDHLDSGSVASPNRETEAMADGSDAVSDWPLLNALLNTASGATWVSLHHGGGVGMGFSQHAGMVIVCDGSEAADKRIERVLWNDPATGVMRHADAGYAIATDCAKEKGLDLPGILR</sequence>
<keyword id="KW-0963">Cytoplasm</keyword>
<keyword id="KW-0369">Histidine metabolism</keyword>
<keyword id="KW-0456">Lyase</keyword>
<keyword id="KW-0520">NAD</keyword>
<gene>
    <name evidence="1" type="primary">hutU</name>
    <name type="ordered locus">XCV1676</name>
</gene>